<feature type="signal peptide" evidence="2">
    <location>
        <begin position="1"/>
        <end position="21"/>
    </location>
</feature>
<feature type="chain" id="PRO_0000089625" description="Chorion protein S19">
    <location>
        <begin position="22"/>
        <end position="173"/>
    </location>
</feature>
<feature type="sequence conflict" description="In Ref. 4; ABV82424." evidence="3" ref="4">
    <original>I</original>
    <variation>V</variation>
    <location>
        <position position="15"/>
    </location>
</feature>
<accession>P07186</accession>
<accession>A8E6S9</accession>
<accession>A8E6T1</accession>
<accession>A8E7A0</accession>
<accession>Q9VSP3</accession>
<reference key="1">
    <citation type="journal article" date="1985" name="Chromosoma">
        <title>Coding and potential regulatory sequences of a cluster of chorion genes in Drosophila melanogaster.</title>
        <authorList>
            <person name="Wong Y.-C."/>
            <person name="Pustell J."/>
            <person name="Spoerel N."/>
            <person name="Kafatos F.C."/>
        </authorList>
    </citation>
    <scope>NUCLEOTIDE SEQUENCE [GENOMIC DNA]</scope>
</reference>
<reference key="2">
    <citation type="journal article" date="2000" name="Science">
        <title>The genome sequence of Drosophila melanogaster.</title>
        <authorList>
            <person name="Adams M.D."/>
            <person name="Celniker S.E."/>
            <person name="Holt R.A."/>
            <person name="Evans C.A."/>
            <person name="Gocayne J.D."/>
            <person name="Amanatides P.G."/>
            <person name="Scherer S.E."/>
            <person name="Li P.W."/>
            <person name="Hoskins R.A."/>
            <person name="Galle R.F."/>
            <person name="George R.A."/>
            <person name="Lewis S.E."/>
            <person name="Richards S."/>
            <person name="Ashburner M."/>
            <person name="Henderson S.N."/>
            <person name="Sutton G.G."/>
            <person name="Wortman J.R."/>
            <person name="Yandell M.D."/>
            <person name="Zhang Q."/>
            <person name="Chen L.X."/>
            <person name="Brandon R.C."/>
            <person name="Rogers Y.-H.C."/>
            <person name="Blazej R.G."/>
            <person name="Champe M."/>
            <person name="Pfeiffer B.D."/>
            <person name="Wan K.H."/>
            <person name="Doyle C."/>
            <person name="Baxter E.G."/>
            <person name="Helt G."/>
            <person name="Nelson C.R."/>
            <person name="Miklos G.L.G."/>
            <person name="Abril J.F."/>
            <person name="Agbayani A."/>
            <person name="An H.-J."/>
            <person name="Andrews-Pfannkoch C."/>
            <person name="Baldwin D."/>
            <person name="Ballew R.M."/>
            <person name="Basu A."/>
            <person name="Baxendale J."/>
            <person name="Bayraktaroglu L."/>
            <person name="Beasley E.M."/>
            <person name="Beeson K.Y."/>
            <person name="Benos P.V."/>
            <person name="Berman B.P."/>
            <person name="Bhandari D."/>
            <person name="Bolshakov S."/>
            <person name="Borkova D."/>
            <person name="Botchan M.R."/>
            <person name="Bouck J."/>
            <person name="Brokstein P."/>
            <person name="Brottier P."/>
            <person name="Burtis K.C."/>
            <person name="Busam D.A."/>
            <person name="Butler H."/>
            <person name="Cadieu E."/>
            <person name="Center A."/>
            <person name="Chandra I."/>
            <person name="Cherry J.M."/>
            <person name="Cawley S."/>
            <person name="Dahlke C."/>
            <person name="Davenport L.B."/>
            <person name="Davies P."/>
            <person name="de Pablos B."/>
            <person name="Delcher A."/>
            <person name="Deng Z."/>
            <person name="Mays A.D."/>
            <person name="Dew I."/>
            <person name="Dietz S.M."/>
            <person name="Dodson K."/>
            <person name="Doup L.E."/>
            <person name="Downes M."/>
            <person name="Dugan-Rocha S."/>
            <person name="Dunkov B.C."/>
            <person name="Dunn P."/>
            <person name="Durbin K.J."/>
            <person name="Evangelista C.C."/>
            <person name="Ferraz C."/>
            <person name="Ferriera S."/>
            <person name="Fleischmann W."/>
            <person name="Fosler C."/>
            <person name="Gabrielian A.E."/>
            <person name="Garg N.S."/>
            <person name="Gelbart W.M."/>
            <person name="Glasser K."/>
            <person name="Glodek A."/>
            <person name="Gong F."/>
            <person name="Gorrell J.H."/>
            <person name="Gu Z."/>
            <person name="Guan P."/>
            <person name="Harris M."/>
            <person name="Harris N.L."/>
            <person name="Harvey D.A."/>
            <person name="Heiman T.J."/>
            <person name="Hernandez J.R."/>
            <person name="Houck J."/>
            <person name="Hostin D."/>
            <person name="Houston K.A."/>
            <person name="Howland T.J."/>
            <person name="Wei M.-H."/>
            <person name="Ibegwam C."/>
            <person name="Jalali M."/>
            <person name="Kalush F."/>
            <person name="Karpen G.H."/>
            <person name="Ke Z."/>
            <person name="Kennison J.A."/>
            <person name="Ketchum K.A."/>
            <person name="Kimmel B.E."/>
            <person name="Kodira C.D."/>
            <person name="Kraft C.L."/>
            <person name="Kravitz S."/>
            <person name="Kulp D."/>
            <person name="Lai Z."/>
            <person name="Lasko P."/>
            <person name="Lei Y."/>
            <person name="Levitsky A.A."/>
            <person name="Li J.H."/>
            <person name="Li Z."/>
            <person name="Liang Y."/>
            <person name="Lin X."/>
            <person name="Liu X."/>
            <person name="Mattei B."/>
            <person name="McIntosh T.C."/>
            <person name="McLeod M.P."/>
            <person name="McPherson D."/>
            <person name="Merkulov G."/>
            <person name="Milshina N.V."/>
            <person name="Mobarry C."/>
            <person name="Morris J."/>
            <person name="Moshrefi A."/>
            <person name="Mount S.M."/>
            <person name="Moy M."/>
            <person name="Murphy B."/>
            <person name="Murphy L."/>
            <person name="Muzny D.M."/>
            <person name="Nelson D.L."/>
            <person name="Nelson D.R."/>
            <person name="Nelson K.A."/>
            <person name="Nixon K."/>
            <person name="Nusskern D.R."/>
            <person name="Pacleb J.M."/>
            <person name="Palazzolo M."/>
            <person name="Pittman G.S."/>
            <person name="Pan S."/>
            <person name="Pollard J."/>
            <person name="Puri V."/>
            <person name="Reese M.G."/>
            <person name="Reinert K."/>
            <person name="Remington K."/>
            <person name="Saunders R.D.C."/>
            <person name="Scheeler F."/>
            <person name="Shen H."/>
            <person name="Shue B.C."/>
            <person name="Siden-Kiamos I."/>
            <person name="Simpson M."/>
            <person name="Skupski M.P."/>
            <person name="Smith T.J."/>
            <person name="Spier E."/>
            <person name="Spradling A.C."/>
            <person name="Stapleton M."/>
            <person name="Strong R."/>
            <person name="Sun E."/>
            <person name="Svirskas R."/>
            <person name="Tector C."/>
            <person name="Turner R."/>
            <person name="Venter E."/>
            <person name="Wang A.H."/>
            <person name="Wang X."/>
            <person name="Wang Z.-Y."/>
            <person name="Wassarman D.A."/>
            <person name="Weinstock G.M."/>
            <person name="Weissenbach J."/>
            <person name="Williams S.M."/>
            <person name="Woodage T."/>
            <person name="Worley K.C."/>
            <person name="Wu D."/>
            <person name="Yang S."/>
            <person name="Yao Q.A."/>
            <person name="Ye J."/>
            <person name="Yeh R.-F."/>
            <person name="Zaveri J.S."/>
            <person name="Zhan M."/>
            <person name="Zhang G."/>
            <person name="Zhao Q."/>
            <person name="Zheng L."/>
            <person name="Zheng X.H."/>
            <person name="Zhong F.N."/>
            <person name="Zhong W."/>
            <person name="Zhou X."/>
            <person name="Zhu S.C."/>
            <person name="Zhu X."/>
            <person name="Smith H.O."/>
            <person name="Gibbs R.A."/>
            <person name="Myers E.W."/>
            <person name="Rubin G.M."/>
            <person name="Venter J.C."/>
        </authorList>
    </citation>
    <scope>NUCLEOTIDE SEQUENCE [LARGE SCALE GENOMIC DNA]</scope>
    <source>
        <strain>Berkeley</strain>
    </source>
</reference>
<reference key="3">
    <citation type="journal article" date="2002" name="Genome Biol.">
        <title>Annotation of the Drosophila melanogaster euchromatic genome: a systematic review.</title>
        <authorList>
            <person name="Misra S."/>
            <person name="Crosby M.A."/>
            <person name="Mungall C.J."/>
            <person name="Matthews B.B."/>
            <person name="Campbell K.S."/>
            <person name="Hradecky P."/>
            <person name="Huang Y."/>
            <person name="Kaminker J.S."/>
            <person name="Millburn G.H."/>
            <person name="Prochnik S.E."/>
            <person name="Smith C.D."/>
            <person name="Tupy J.L."/>
            <person name="Whitfield E.J."/>
            <person name="Bayraktaroglu L."/>
            <person name="Berman B.P."/>
            <person name="Bettencourt B.R."/>
            <person name="Celniker S.E."/>
            <person name="de Grey A.D.N.J."/>
            <person name="Drysdale R.A."/>
            <person name="Harris N.L."/>
            <person name="Richter J."/>
            <person name="Russo S."/>
            <person name="Schroeder A.J."/>
            <person name="Shu S.Q."/>
            <person name="Stapleton M."/>
            <person name="Yamada C."/>
            <person name="Ashburner M."/>
            <person name="Gelbart W.M."/>
            <person name="Rubin G.M."/>
            <person name="Lewis S.E."/>
        </authorList>
    </citation>
    <scope>GENOME REANNOTATION</scope>
    <source>
        <strain>Berkeley</strain>
    </source>
</reference>
<reference key="4">
    <citation type="submission" date="2007-10" db="EMBL/GenBank/DDBJ databases">
        <authorList>
            <person name="Stapleton M."/>
            <person name="Carlson J.W."/>
            <person name="Frise E."/>
            <person name="Kapadia B."/>
            <person name="Park S."/>
            <person name="Wan K.H."/>
            <person name="Yu C."/>
            <person name="Celniker S.E."/>
        </authorList>
    </citation>
    <scope>NUCLEOTIDE SEQUENCE [LARGE SCALE MRNA]</scope>
    <source>
        <strain>Berkeley</strain>
    </source>
</reference>
<protein>
    <recommendedName>
        <fullName>Chorion protein S19</fullName>
    </recommendedName>
</protein>
<sequence>MNKFATLAVIFCACIVGSCYANYGGQQSYGQRSYGQDSSAASAASSAAAAGAEGQQRYERPVEIIAGGYRGSYAPEILRPIQVSGGYGGERRGYNGGNYRRAGYGPRWTVQPAGATLLYPGQNNYKAYVSPPEYSKVILPIRPAAPVAKLFVPENQYGNQYVSQYSAPRSSGY</sequence>
<dbReference type="EMBL" id="X02497">
    <property type="protein sequence ID" value="CAA26330.1"/>
    <property type="molecule type" value="Genomic_DNA"/>
</dbReference>
<dbReference type="EMBL" id="AE014296">
    <property type="protein sequence ID" value="AAF50373.1"/>
    <property type="molecule type" value="Genomic_DNA"/>
</dbReference>
<dbReference type="EMBL" id="BT030871">
    <property type="protein sequence ID" value="ABV82253.1"/>
    <property type="status" value="ALT_FRAME"/>
    <property type="molecule type" value="mRNA"/>
</dbReference>
<dbReference type="EMBL" id="BT030873">
    <property type="protein sequence ID" value="ABV82255.1"/>
    <property type="molecule type" value="mRNA"/>
</dbReference>
<dbReference type="EMBL" id="BT030885">
    <property type="protein sequence ID" value="ABV82267.1"/>
    <property type="molecule type" value="mRNA"/>
</dbReference>
<dbReference type="EMBL" id="BT030886">
    <property type="protein sequence ID" value="ABV82268.1"/>
    <property type="molecule type" value="mRNA"/>
</dbReference>
<dbReference type="EMBL" id="BT031042">
    <property type="protein sequence ID" value="ABV82424.1"/>
    <property type="molecule type" value="mRNA"/>
</dbReference>
<dbReference type="RefSeq" id="NP_523980.1">
    <property type="nucleotide sequence ID" value="NM_079256.4"/>
</dbReference>
<dbReference type="BioGRID" id="64406">
    <property type="interactions" value="1"/>
</dbReference>
<dbReference type="DIP" id="DIP-17693N"/>
<dbReference type="FunCoup" id="P07186">
    <property type="interactions" value="1"/>
</dbReference>
<dbReference type="IntAct" id="P07186">
    <property type="interactions" value="1"/>
</dbReference>
<dbReference type="STRING" id="7227.FBpp0076300"/>
<dbReference type="PaxDb" id="7227-FBpp0076300"/>
<dbReference type="DNASU" id="39000"/>
<dbReference type="EnsemblMetazoa" id="FBtr0076573">
    <property type="protein sequence ID" value="FBpp0076300"/>
    <property type="gene ID" value="FBgn0000358"/>
</dbReference>
<dbReference type="GeneID" id="39000"/>
<dbReference type="KEGG" id="dme:Dmel_CG6524"/>
<dbReference type="AGR" id="FB:FBgn0000358"/>
<dbReference type="CTD" id="39000"/>
<dbReference type="FlyBase" id="FBgn0000358">
    <property type="gene designation" value="Cp19"/>
</dbReference>
<dbReference type="VEuPathDB" id="VectorBase:FBgn0000358"/>
<dbReference type="eggNOG" id="ENOG502S3GF">
    <property type="taxonomic scope" value="Eukaryota"/>
</dbReference>
<dbReference type="HOGENOM" id="CLU_1410206_0_0_1"/>
<dbReference type="InParanoid" id="P07186"/>
<dbReference type="OMA" id="AVIFCAC"/>
<dbReference type="OrthoDB" id="7859712at2759"/>
<dbReference type="PhylomeDB" id="P07186"/>
<dbReference type="SignaLink" id="P07186"/>
<dbReference type="BioGRID-ORCS" id="39000">
    <property type="hits" value="0 hits in 1 CRISPR screen"/>
</dbReference>
<dbReference type="GenomeRNAi" id="39000"/>
<dbReference type="PRO" id="PR:P07186"/>
<dbReference type="Proteomes" id="UP000000803">
    <property type="component" value="Chromosome 3L"/>
</dbReference>
<dbReference type="Bgee" id="FBgn0000358">
    <property type="expression patterns" value="Expressed in dorsal appendage forming follicle cell in ovary and 56 other cell types or tissues"/>
</dbReference>
<dbReference type="GO" id="GO:0042600">
    <property type="term" value="C:egg chorion"/>
    <property type="evidence" value="ECO:0000305"/>
    <property type="project" value="FlyBase"/>
</dbReference>
<dbReference type="GO" id="GO:0005576">
    <property type="term" value="C:extracellular region"/>
    <property type="evidence" value="ECO:0007669"/>
    <property type="project" value="UniProtKB-SubCell"/>
</dbReference>
<dbReference type="GO" id="GO:0005213">
    <property type="term" value="F:structural constituent of egg chorion"/>
    <property type="evidence" value="ECO:0000305"/>
    <property type="project" value="FlyBase"/>
</dbReference>
<dbReference type="GO" id="GO:0007304">
    <property type="term" value="P:chorion-containing eggshell formation"/>
    <property type="evidence" value="ECO:0000270"/>
    <property type="project" value="FlyBase"/>
</dbReference>
<dbReference type="InterPro" id="IPR005649">
    <property type="entry name" value="Chorion_2"/>
</dbReference>
<dbReference type="Pfam" id="PF03964">
    <property type="entry name" value="Chorion_2"/>
    <property type="match status" value="1"/>
</dbReference>
<keyword id="KW-1185">Reference proteome</keyword>
<keyword id="KW-0964">Secreted</keyword>
<keyword id="KW-0732">Signal</keyword>
<comment type="function">
    <text evidence="1">Chorion membrane (egg shell) protein; plays a role in protecting the egg from the environment.</text>
</comment>
<comment type="subcellular location">
    <subcellularLocation>
        <location evidence="3">Secreted</location>
    </subcellularLocation>
</comment>
<comment type="similarity">
    <text evidence="3">Belongs to the chorion protein S19 family.</text>
</comment>
<comment type="sequence caution" evidence="3">
    <conflict type="frameshift">
        <sequence resource="EMBL-CDS" id="ABV82253"/>
    </conflict>
</comment>
<organism>
    <name type="scientific">Drosophila melanogaster</name>
    <name type="common">Fruit fly</name>
    <dbReference type="NCBI Taxonomy" id="7227"/>
    <lineage>
        <taxon>Eukaryota</taxon>
        <taxon>Metazoa</taxon>
        <taxon>Ecdysozoa</taxon>
        <taxon>Arthropoda</taxon>
        <taxon>Hexapoda</taxon>
        <taxon>Insecta</taxon>
        <taxon>Pterygota</taxon>
        <taxon>Neoptera</taxon>
        <taxon>Endopterygota</taxon>
        <taxon>Diptera</taxon>
        <taxon>Brachycera</taxon>
        <taxon>Muscomorpha</taxon>
        <taxon>Ephydroidea</taxon>
        <taxon>Drosophilidae</taxon>
        <taxon>Drosophila</taxon>
        <taxon>Sophophora</taxon>
    </lineage>
</organism>
<proteinExistence type="evidence at transcript level"/>
<gene>
    <name type="primary">Cp19</name>
    <name type="synonym">s19</name>
    <name type="ORF">CG6524</name>
</gene>
<evidence type="ECO:0000250" key="1"/>
<evidence type="ECO:0000255" key="2"/>
<evidence type="ECO:0000305" key="3"/>
<name>CH19_DROME</name>